<dbReference type="EMBL" id="X52974">
    <property type="protein sequence ID" value="CAA37155.1"/>
    <property type="molecule type" value="Genomic_DNA"/>
</dbReference>
<dbReference type="PIR" id="S27342">
    <property type="entry name" value="S27342"/>
</dbReference>
<dbReference type="RefSeq" id="WP_018517052.1">
    <property type="nucleotide sequence ID" value="NZ_WIEJ01000010.1"/>
</dbReference>
<dbReference type="SMR" id="P28150"/>
<dbReference type="Gene3D" id="3.30.1370.140">
    <property type="entry name" value="HupH hydrogenase expression protein, C-terminal domain"/>
    <property type="match status" value="2"/>
</dbReference>
<dbReference type="InterPro" id="IPR038527">
    <property type="entry name" value="HupH_C_sf"/>
</dbReference>
<dbReference type="InterPro" id="IPR006894">
    <property type="entry name" value="HupH_Hydgase_express_prot_C"/>
</dbReference>
<dbReference type="Pfam" id="PF04809">
    <property type="entry name" value="HupH_C"/>
    <property type="match status" value="2"/>
</dbReference>
<proteinExistence type="inferred from homology"/>
<name>HUPH_RHILV</name>
<organism>
    <name type="scientific">Rhizobium leguminosarum bv. viciae</name>
    <dbReference type="NCBI Taxonomy" id="387"/>
    <lineage>
        <taxon>Bacteria</taxon>
        <taxon>Pseudomonadati</taxon>
        <taxon>Pseudomonadota</taxon>
        <taxon>Alphaproteobacteria</taxon>
        <taxon>Hyphomicrobiales</taxon>
        <taxon>Rhizobiaceae</taxon>
        <taxon>Rhizobium/Agrobacterium group</taxon>
        <taxon>Rhizobium</taxon>
    </lineage>
</organism>
<comment type="function">
    <text>Not known. Could enhance the incorporation of nickel to the hydrogenase.</text>
</comment>
<comment type="similarity">
    <text evidence="1">Belongs to the HupH/HyaF family.</text>
</comment>
<evidence type="ECO:0000305" key="1"/>
<feature type="chain" id="PRO_0000201419" description="Hydrogenase expression/formation protein HupH">
    <location>
        <begin position="1"/>
        <end position="282"/>
    </location>
</feature>
<protein>
    <recommendedName>
        <fullName>Hydrogenase expression/formation protein HupH</fullName>
    </recommendedName>
</protein>
<keyword id="KW-0533">Nickel</keyword>
<reference key="1">
    <citation type="journal article" date="1992" name="J. Mol. Biol.">
        <title>Nucleotide sequence and organization of an H2-uptake gene cluster from Rhizobium leguminosarum bv. viciae containing a rubredoxin-like gene and four additional open reading frames.</title>
        <authorList>
            <person name="Rey L."/>
            <person name="Hidalgo E."/>
            <person name="Palacios J.M."/>
            <person name="Ruiz-Argueso T."/>
        </authorList>
    </citation>
    <scope>NUCLEOTIDE SEQUENCE [GENOMIC DNA]</scope>
    <source>
        <strain>128c53</strain>
    </source>
</reference>
<gene>
    <name type="primary">hupH</name>
</gene>
<sequence length="282" mass="30507">MKAGFWVAPEGEGAAMTVMPIGAEPPLRARKLNFLATSSAEEMIRRCRRTAMLLPELADALAVQKAEQPGRLFDITDFPDDDRELITQTLGEGEVAGVAALANGVTAQMQEAVMAGVWRIRFTDVDGRLIADYIEVASIPAAVRQACSGLPASISHGPAPAGAMNVMPVLTEIGDRIARYRDGDPAHVITFSLFPMSPEDMAFLQDALGAGPVQLTSRGYGTCRVVATGARNVWSVQFYNAMDTIILDTLEVCNIPSVAIAAEEDFRDSEARLRDIWEAYFK</sequence>
<accession>P28150</accession>